<reference key="1">
    <citation type="journal article" date="2008" name="PLoS Genet.">
        <title>Genomic islands in the pathogenic filamentous fungus Aspergillus fumigatus.</title>
        <authorList>
            <person name="Fedorova N.D."/>
            <person name="Khaldi N."/>
            <person name="Joardar V.S."/>
            <person name="Maiti R."/>
            <person name="Amedeo P."/>
            <person name="Anderson M.J."/>
            <person name="Crabtree J."/>
            <person name="Silva J.C."/>
            <person name="Badger J.H."/>
            <person name="Albarraq A."/>
            <person name="Angiuoli S."/>
            <person name="Bussey H."/>
            <person name="Bowyer P."/>
            <person name="Cotty P.J."/>
            <person name="Dyer P.S."/>
            <person name="Egan A."/>
            <person name="Galens K."/>
            <person name="Fraser-Liggett C.M."/>
            <person name="Haas B.J."/>
            <person name="Inman J.M."/>
            <person name="Kent R."/>
            <person name="Lemieux S."/>
            <person name="Malavazi I."/>
            <person name="Orvis J."/>
            <person name="Roemer T."/>
            <person name="Ronning C.M."/>
            <person name="Sundaram J.P."/>
            <person name="Sutton G."/>
            <person name="Turner G."/>
            <person name="Venter J.C."/>
            <person name="White O.R."/>
            <person name="Whitty B.R."/>
            <person name="Youngman P."/>
            <person name="Wolfe K.H."/>
            <person name="Goldman G.H."/>
            <person name="Wortman J.R."/>
            <person name="Jiang B."/>
            <person name="Denning D.W."/>
            <person name="Nierman W.C."/>
        </authorList>
    </citation>
    <scope>NUCLEOTIDE SEQUENCE [LARGE SCALE GENOMIC DNA]</scope>
    <source>
        <strain>ATCC 1007 / CBS 513.65 / DSM 816 / NCTC 3887 / NRRL 1 / QM 1276 / 107</strain>
    </source>
</reference>
<keyword id="KW-0963">Cytoplasm</keyword>
<keyword id="KW-0539">Nucleus</keyword>
<keyword id="KW-1185">Reference proteome</keyword>
<keyword id="KW-0694">RNA-binding</keyword>
<keyword id="KW-0813">Transport</keyword>
<keyword id="KW-0819">tRNA processing</keyword>
<keyword id="KW-0820">tRNA-binding</keyword>
<feature type="chain" id="PRO_0000343079" description="Exportin-T">
    <location>
        <begin position="1"/>
        <end position="1029"/>
    </location>
</feature>
<accession>A1CAU2</accession>
<gene>
    <name type="primary">los1</name>
    <name type="ORF">ACLA_012880</name>
</gene>
<protein>
    <recommendedName>
        <fullName>Exportin-T</fullName>
    </recommendedName>
    <alternativeName>
        <fullName>Exportin(tRNA)</fullName>
    </alternativeName>
    <alternativeName>
        <fullName>Karyopherin-beta</fullName>
    </alternativeName>
    <alternativeName>
        <fullName>tRNA exportin</fullName>
    </alternativeName>
</protein>
<proteinExistence type="inferred from homology"/>
<sequence length="1029" mass="114652">MEEQVANAIEIASNPSSEPALKAQAFDFVNQLRSDPSGWQVCLSLFTQTPQRSGIVRHVALEVVNGAAQGGLIDLQALAFVKDGLLAYLRQVYGQDAGASDPPNIQNKIAQTVTFLFSALYANGWETFFDDLLSLTYKSPSSTARDNASGIIFYLRVINSIHDEIGDVLVSRSRNEQDKANSLKDLIRQRDMQQITSSWQQILSEWRDGNDVIVEMCLKAVGSWVSWIDIGLVVNQTMLDLLFQQLGRAQKADLRQGEEKVRDAAVDVFTEIIGKKMKAEDKIDMIIFLNLDTIVSQLSNSPPLHANRFTFKYDTDLAETVAKLVNITVIDIVRALEQEGVSAECKEKANGLLQVFLPHILRFFSDEYDEVCSTVIPCVSDLLTYLRKIAKINPALAAQHSSILLPILKAIIAKMRYDDTSSWGDEDDQTDEAEFQELRKRLGVLQQIVASVNEQLYMEAVSEVVGTTFENLRQSGAQLDWRDLDLALHEMFLFGDLAVKAGSLYTKGSPNNQAAERLIEMMLRMVESDIRSFTHPATQLQYMEICVRYSSFFHHHTHLIPGVLESFLQLVHHPVKKVKTRSWYLFQRLVKQLRQYIGNVAQTVVEALGDLLVIQAEVSPEGSDGDEMSSEDHEGSADAVFNSQLYLFEAVGIICSTPTVPADKQVLYAQSVLNPIFLDMEKNLEAAKSHDERALLQIHHDIMALGTLARGFSDWMPGTNTPATLPAPEVSEAFNQVSEATLVALESLKTSFNVRTAARFAFSRLIGVLGSRILPQLPRWIDGLLTQTSSRDEMALFLRLLDQVIFGFKGEIYSILDTLLTPFLQRVFSGIADPTTGTDDEIRLAELKREYLNFLLAVLNNDLGAVIISERNQPIFETVISTIEHFSKDIDDFTTAKMAFSVLSKMGSSWGGPDIAPDATNGVPPQAALPGFSQFMISRFSPLCWALPTTPSFNSKDAQARQVLAEAGGLQRTIYSKTGMEYIAYLRDRELPGMGMGGELIEEFLGALSRLDLKGFRQFFPSFIQRLSA</sequence>
<name>XPOT_ASPCL</name>
<organism>
    <name type="scientific">Aspergillus clavatus (strain ATCC 1007 / CBS 513.65 / DSM 816 / NCTC 3887 / NRRL 1 / QM 1276 / 107)</name>
    <dbReference type="NCBI Taxonomy" id="344612"/>
    <lineage>
        <taxon>Eukaryota</taxon>
        <taxon>Fungi</taxon>
        <taxon>Dikarya</taxon>
        <taxon>Ascomycota</taxon>
        <taxon>Pezizomycotina</taxon>
        <taxon>Eurotiomycetes</taxon>
        <taxon>Eurotiomycetidae</taxon>
        <taxon>Eurotiales</taxon>
        <taxon>Aspergillaceae</taxon>
        <taxon>Aspergillus</taxon>
        <taxon>Aspergillus subgen. Fumigati</taxon>
    </lineage>
</organism>
<dbReference type="EMBL" id="DS027049">
    <property type="protein sequence ID" value="EAW12860.1"/>
    <property type="molecule type" value="Genomic_DNA"/>
</dbReference>
<dbReference type="RefSeq" id="XP_001274286.1">
    <property type="nucleotide sequence ID" value="XM_001274285.1"/>
</dbReference>
<dbReference type="SMR" id="A1CAU2"/>
<dbReference type="STRING" id="344612.A1CAU2"/>
<dbReference type="EnsemblFungi" id="EAW12860">
    <property type="protein sequence ID" value="EAW12860"/>
    <property type="gene ID" value="ACLA_012880"/>
</dbReference>
<dbReference type="GeneID" id="4706423"/>
<dbReference type="KEGG" id="act:ACLA_012880"/>
<dbReference type="VEuPathDB" id="FungiDB:ACLA_012880"/>
<dbReference type="eggNOG" id="KOG2021">
    <property type="taxonomic scope" value="Eukaryota"/>
</dbReference>
<dbReference type="HOGENOM" id="CLU_004414_0_1_1"/>
<dbReference type="OMA" id="HEMFLFG"/>
<dbReference type="OrthoDB" id="26399at2759"/>
<dbReference type="Proteomes" id="UP000006701">
    <property type="component" value="Unassembled WGS sequence"/>
</dbReference>
<dbReference type="GO" id="GO:0005737">
    <property type="term" value="C:cytoplasm"/>
    <property type="evidence" value="ECO:0007669"/>
    <property type="project" value="UniProtKB-SubCell"/>
</dbReference>
<dbReference type="GO" id="GO:0016363">
    <property type="term" value="C:nuclear matrix"/>
    <property type="evidence" value="ECO:0007669"/>
    <property type="project" value="TreeGrafter"/>
</dbReference>
<dbReference type="GO" id="GO:0005643">
    <property type="term" value="C:nuclear pore"/>
    <property type="evidence" value="ECO:0007669"/>
    <property type="project" value="TreeGrafter"/>
</dbReference>
<dbReference type="GO" id="GO:0031267">
    <property type="term" value="F:small GTPase binding"/>
    <property type="evidence" value="ECO:0007669"/>
    <property type="project" value="InterPro"/>
</dbReference>
<dbReference type="GO" id="GO:0000049">
    <property type="term" value="F:tRNA binding"/>
    <property type="evidence" value="ECO:0007669"/>
    <property type="project" value="UniProtKB-KW"/>
</dbReference>
<dbReference type="GO" id="GO:0008033">
    <property type="term" value="P:tRNA processing"/>
    <property type="evidence" value="ECO:0007669"/>
    <property type="project" value="UniProtKB-KW"/>
</dbReference>
<dbReference type="GO" id="GO:0071528">
    <property type="term" value="P:tRNA re-export from nucleus"/>
    <property type="evidence" value="ECO:0007669"/>
    <property type="project" value="InterPro"/>
</dbReference>
<dbReference type="FunFam" id="1.25.10.10:FF:000355">
    <property type="entry name" value="Exportin-T"/>
    <property type="match status" value="1"/>
</dbReference>
<dbReference type="Gene3D" id="1.25.10.10">
    <property type="entry name" value="Leucine-rich Repeat Variant"/>
    <property type="match status" value="1"/>
</dbReference>
<dbReference type="InterPro" id="IPR011989">
    <property type="entry name" value="ARM-like"/>
</dbReference>
<dbReference type="InterPro" id="IPR016024">
    <property type="entry name" value="ARM-type_fold"/>
</dbReference>
<dbReference type="InterPro" id="IPR013598">
    <property type="entry name" value="Exportin-1/Importin-b-like"/>
</dbReference>
<dbReference type="InterPro" id="IPR045546">
    <property type="entry name" value="Exportin-T_C"/>
</dbReference>
<dbReference type="InterPro" id="IPR040017">
    <property type="entry name" value="XPOT"/>
</dbReference>
<dbReference type="PANTHER" id="PTHR15952:SF11">
    <property type="entry name" value="EXPORTIN-T"/>
    <property type="match status" value="1"/>
</dbReference>
<dbReference type="PANTHER" id="PTHR15952">
    <property type="entry name" value="EXPORTIN-T/LOS1"/>
    <property type="match status" value="1"/>
</dbReference>
<dbReference type="Pfam" id="PF19282">
    <property type="entry name" value="Exportin-T"/>
    <property type="match status" value="1"/>
</dbReference>
<dbReference type="Pfam" id="PF08389">
    <property type="entry name" value="Xpo1"/>
    <property type="match status" value="1"/>
</dbReference>
<dbReference type="SUPFAM" id="SSF48371">
    <property type="entry name" value="ARM repeat"/>
    <property type="match status" value="1"/>
</dbReference>
<evidence type="ECO:0000250" key="1"/>
<evidence type="ECO:0000305" key="2"/>
<comment type="function">
    <text evidence="1">tRNA nucleus export receptor which facilitates tRNA translocation across the nuclear pore complex. Involved in pre-tRNA splicing, probably by affecting the interaction of pre-tRNA with splicing endonuclease (By similarity).</text>
</comment>
<comment type="subcellular location">
    <subcellularLocation>
        <location evidence="1">Nucleus</location>
    </subcellularLocation>
    <subcellularLocation>
        <location evidence="1">Cytoplasm</location>
    </subcellularLocation>
    <text evidence="1">Shuttles between the nucleus and the cytoplasm.</text>
</comment>
<comment type="similarity">
    <text evidence="2">Belongs to the exportin family.</text>
</comment>